<gene>
    <name evidence="1" type="primary">rps16</name>
</gene>
<dbReference type="EMBL" id="AP006715">
    <property type="protein sequence ID" value="BAE92476.1"/>
    <property type="molecule type" value="Genomic_DNA"/>
</dbReference>
<dbReference type="RefSeq" id="YP_537033.1">
    <property type="nucleotide sequence ID" value="NC_007932.1"/>
</dbReference>
<dbReference type="SMR" id="Q1XDD5"/>
<dbReference type="GeneID" id="3978812"/>
<dbReference type="GO" id="GO:0009507">
    <property type="term" value="C:chloroplast"/>
    <property type="evidence" value="ECO:0007669"/>
    <property type="project" value="UniProtKB-SubCell"/>
</dbReference>
<dbReference type="GO" id="GO:0005739">
    <property type="term" value="C:mitochondrion"/>
    <property type="evidence" value="ECO:0007669"/>
    <property type="project" value="GOC"/>
</dbReference>
<dbReference type="GO" id="GO:0015935">
    <property type="term" value="C:small ribosomal subunit"/>
    <property type="evidence" value="ECO:0007669"/>
    <property type="project" value="TreeGrafter"/>
</dbReference>
<dbReference type="GO" id="GO:0003735">
    <property type="term" value="F:structural constituent of ribosome"/>
    <property type="evidence" value="ECO:0007669"/>
    <property type="project" value="InterPro"/>
</dbReference>
<dbReference type="GO" id="GO:0032543">
    <property type="term" value="P:mitochondrial translation"/>
    <property type="evidence" value="ECO:0007669"/>
    <property type="project" value="TreeGrafter"/>
</dbReference>
<dbReference type="Gene3D" id="3.30.1320.10">
    <property type="match status" value="1"/>
</dbReference>
<dbReference type="HAMAP" id="MF_00385">
    <property type="entry name" value="Ribosomal_bS16"/>
    <property type="match status" value="1"/>
</dbReference>
<dbReference type="InterPro" id="IPR000307">
    <property type="entry name" value="Ribosomal_bS16"/>
</dbReference>
<dbReference type="InterPro" id="IPR020592">
    <property type="entry name" value="Ribosomal_bS16_CS"/>
</dbReference>
<dbReference type="InterPro" id="IPR023803">
    <property type="entry name" value="Ribosomal_bS16_dom_sf"/>
</dbReference>
<dbReference type="NCBIfam" id="TIGR00002">
    <property type="entry name" value="S16"/>
    <property type="match status" value="1"/>
</dbReference>
<dbReference type="PANTHER" id="PTHR12919">
    <property type="entry name" value="30S RIBOSOMAL PROTEIN S16"/>
    <property type="match status" value="1"/>
</dbReference>
<dbReference type="PANTHER" id="PTHR12919:SF20">
    <property type="entry name" value="SMALL RIBOSOMAL SUBUNIT PROTEIN BS16M"/>
    <property type="match status" value="1"/>
</dbReference>
<dbReference type="Pfam" id="PF00886">
    <property type="entry name" value="Ribosomal_S16"/>
    <property type="match status" value="1"/>
</dbReference>
<dbReference type="SUPFAM" id="SSF54565">
    <property type="entry name" value="Ribosomal protein S16"/>
    <property type="match status" value="1"/>
</dbReference>
<dbReference type="PROSITE" id="PS00732">
    <property type="entry name" value="RIBOSOMAL_S16"/>
    <property type="match status" value="1"/>
</dbReference>
<organism>
    <name type="scientific">Pyropia yezoensis</name>
    <name type="common">Susabi-nori</name>
    <name type="synonym">Porphyra yezoensis</name>
    <dbReference type="NCBI Taxonomy" id="2788"/>
    <lineage>
        <taxon>Eukaryota</taxon>
        <taxon>Rhodophyta</taxon>
        <taxon>Bangiophyceae</taxon>
        <taxon>Bangiales</taxon>
        <taxon>Bangiaceae</taxon>
        <taxon>Pyropia</taxon>
    </lineage>
</organism>
<comment type="subcellular location">
    <subcellularLocation>
        <location>Plastid</location>
        <location>Chloroplast</location>
    </subcellularLocation>
</comment>
<comment type="similarity">
    <text evidence="1">Belongs to the bacterial ribosomal protein bS16 family.</text>
</comment>
<sequence length="82" mass="9486">MVKLRLKRYGRKKQPSYRIVVMDSRNKRDGKAIEELGFYNPINNETRVNISKILQRLSQGAQATKTVKNILNKAQIVAEKNN</sequence>
<accession>Q1XDD5</accession>
<geneLocation type="chloroplast"/>
<keyword id="KW-0150">Chloroplast</keyword>
<keyword id="KW-0934">Plastid</keyword>
<keyword id="KW-0687">Ribonucleoprotein</keyword>
<keyword id="KW-0689">Ribosomal protein</keyword>
<reference key="1">
    <citation type="submission" date="2003-11" db="EMBL/GenBank/DDBJ databases">
        <title>Whole genome sequence of Porphyra yezoensis chloroplast.</title>
        <authorList>
            <person name="Kunimoto M."/>
            <person name="Morishima K."/>
            <person name="Yoshikawa M."/>
            <person name="Fukuda S."/>
            <person name="Kobayashi T."/>
            <person name="Kobayashi M."/>
            <person name="Okazaki T."/>
            <person name="Ohara I."/>
            <person name="Nakayama I."/>
        </authorList>
    </citation>
    <scope>NUCLEOTIDE SEQUENCE [LARGE SCALE GENOMIC DNA]</scope>
    <source>
        <strain>U-51</strain>
    </source>
</reference>
<name>RR16_PYRYE</name>
<proteinExistence type="inferred from homology"/>
<protein>
    <recommendedName>
        <fullName evidence="1">Small ribosomal subunit protein bS16c</fullName>
    </recommendedName>
    <alternativeName>
        <fullName evidence="2">30S ribosomal protein S16, chloroplastic</fullName>
    </alternativeName>
</protein>
<evidence type="ECO:0000255" key="1">
    <source>
        <dbReference type="HAMAP-Rule" id="MF_00385"/>
    </source>
</evidence>
<evidence type="ECO:0000305" key="2"/>
<feature type="chain" id="PRO_0000276966" description="Small ribosomal subunit protein bS16c">
    <location>
        <begin position="1"/>
        <end position="82"/>
    </location>
</feature>